<organism>
    <name type="scientific">Enterobacteria phage T4</name>
    <name type="common">Bacteriophage T4</name>
    <dbReference type="NCBI Taxonomy" id="10665"/>
    <lineage>
        <taxon>Viruses</taxon>
        <taxon>Duplodnaviria</taxon>
        <taxon>Heunggongvirae</taxon>
        <taxon>Uroviricota</taxon>
        <taxon>Caudoviricetes</taxon>
        <taxon>Straboviridae</taxon>
        <taxon>Tevenvirinae</taxon>
        <taxon>Tequatrovirus</taxon>
    </lineage>
</organism>
<dbReference type="EMBL" id="X15728">
    <property type="status" value="NOT_ANNOTATED_CDS"/>
    <property type="molecule type" value="Genomic_DNA"/>
</dbReference>
<dbReference type="EMBL" id="AF158101">
    <property type="protein sequence ID" value="AAD42683.1"/>
    <property type="molecule type" value="Genomic_DNA"/>
</dbReference>
<dbReference type="RefSeq" id="NP_049758.1">
    <property type="nucleotide sequence ID" value="NC_000866.4"/>
</dbReference>
<dbReference type="GeneID" id="1258816"/>
<dbReference type="KEGG" id="vg:1258816"/>
<dbReference type="Proteomes" id="UP000009087">
    <property type="component" value="Segment"/>
</dbReference>
<dbReference type="GO" id="GO:0003677">
    <property type="term" value="F:DNA binding"/>
    <property type="evidence" value="ECO:0007669"/>
    <property type="project" value="UniProtKB-KW"/>
</dbReference>
<dbReference type="GO" id="GO:0006260">
    <property type="term" value="P:DNA replication"/>
    <property type="evidence" value="ECO:0007669"/>
    <property type="project" value="UniProtKB-KW"/>
</dbReference>
<comment type="function">
    <text evidence="1">Involved in T4 DNA replication. Important for the priming of leading strand DNA synthesis at oriE. Binds to ssDNA.</text>
</comment>
<organismHost>
    <name type="scientific">Escherichia coli</name>
    <dbReference type="NCBI Taxonomy" id="562"/>
</organismHost>
<reference key="1">
    <citation type="journal article" date="1989" name="New Biol.">
        <title>Functional relationships and structural determinants of two bacteriophage T4 lysozymes: a soluble (gene e) and a baseplate-associated (gene 5) protein.</title>
        <authorList>
            <person name="Mosig G."/>
            <person name="Lin G.W."/>
            <person name="Franklin J."/>
            <person name="Fan W.H."/>
        </authorList>
    </citation>
    <scope>NUCLEOTIDE SEQUENCE [GENOMIC DNA]</scope>
</reference>
<reference key="2">
    <citation type="journal article" date="2003" name="Microbiol. Mol. Biol. Rev.">
        <title>Bacteriophage T4 genome.</title>
        <authorList>
            <person name="Miller E.S."/>
            <person name="Kutter E."/>
            <person name="Mosig G."/>
            <person name="Arisaka F."/>
            <person name="Kunisawa T."/>
            <person name="Ruger W."/>
        </authorList>
    </citation>
    <scope>NUCLEOTIDE SEQUENCE [LARGE SCALE GENOMIC DNA]</scope>
</reference>
<reference key="3">
    <citation type="journal article" date="1999" name="J. Bacteriol.">
        <title>Two new early bacteriophage T4 genes, repEA and repEB, that are important for DNA replication initiated from origin E.</title>
        <authorList>
            <person name="Vaiskunaite R."/>
            <person name="Miller A."/>
            <person name="Davenport L."/>
            <person name="Mosig G."/>
        </authorList>
    </citation>
    <scope>IDENTIFICATION</scope>
    <scope>FUNCTION</scope>
</reference>
<name>REPEB_BPT4</name>
<sequence>MVIFQLEYPLHHLVLFEVDADQPHEHEHDLILMGPFYLQQHRQTN</sequence>
<evidence type="ECO:0000269" key="1">
    <source>
    </source>
</evidence>
<gene>
    <name type="primary">repEB</name>
</gene>
<keyword id="KW-0235">DNA replication</keyword>
<keyword id="KW-0238">DNA-binding</keyword>
<keyword id="KW-1185">Reference proteome</keyword>
<feature type="chain" id="PRO_0000164975" description="DNA replication protein repEB">
    <location>
        <begin position="1"/>
        <end position="45"/>
    </location>
</feature>
<protein>
    <recommendedName>
        <fullName>DNA replication protein repEB</fullName>
    </recommendedName>
</protein>
<accession>Q9T0V1</accession>
<proteinExistence type="predicted"/>